<name>QOX3_STAAR</name>
<comment type="function">
    <text evidence="1">Catalyzes quinol oxidation with the concomitant reduction of oxygen to water.</text>
</comment>
<comment type="catalytic activity">
    <reaction>
        <text>2 a quinol + O2 = 2 a quinone + 2 H2O</text>
        <dbReference type="Rhea" id="RHEA:55376"/>
        <dbReference type="ChEBI" id="CHEBI:15377"/>
        <dbReference type="ChEBI" id="CHEBI:15379"/>
        <dbReference type="ChEBI" id="CHEBI:24646"/>
        <dbReference type="ChEBI" id="CHEBI:132124"/>
    </reaction>
</comment>
<comment type="subcellular location">
    <subcellularLocation>
        <location evidence="1">Cell membrane</location>
        <topology evidence="1">Multi-pass membrane protein</topology>
    </subcellularLocation>
</comment>
<comment type="similarity">
    <text evidence="3">Belongs to the cytochrome c oxidase subunit 3 family.</text>
</comment>
<gene>
    <name type="primary">qoxC</name>
    <name type="ordered locus">SAR1032</name>
</gene>
<feature type="chain" id="PRO_0000275886" description="Probable quinol oxidase subunit 3">
    <location>
        <begin position="1"/>
        <end position="201"/>
    </location>
</feature>
<feature type="transmembrane region" description="Helical" evidence="2">
    <location>
        <begin position="20"/>
        <end position="40"/>
    </location>
</feature>
<feature type="transmembrane region" description="Helical" evidence="2">
    <location>
        <begin position="62"/>
        <end position="82"/>
    </location>
</feature>
<feature type="transmembrane region" description="Helical" evidence="2">
    <location>
        <begin position="91"/>
        <end position="111"/>
    </location>
</feature>
<feature type="transmembrane region" description="Helical" evidence="2">
    <location>
        <begin position="133"/>
        <end position="153"/>
    </location>
</feature>
<feature type="transmembrane region" description="Helical" evidence="2">
    <location>
        <begin position="172"/>
        <end position="192"/>
    </location>
</feature>
<protein>
    <recommendedName>
        <fullName>Probable quinol oxidase subunit 3</fullName>
        <ecNumber>1.10.3.-</ecNumber>
    </recommendedName>
    <alternativeName>
        <fullName>Quinol oxidase polypeptide III</fullName>
    </alternativeName>
</protein>
<evidence type="ECO:0000250" key="1"/>
<evidence type="ECO:0000255" key="2"/>
<evidence type="ECO:0000305" key="3"/>
<keyword id="KW-1003">Cell membrane</keyword>
<keyword id="KW-0472">Membrane</keyword>
<keyword id="KW-0560">Oxidoreductase</keyword>
<keyword id="KW-0812">Transmembrane</keyword>
<keyword id="KW-1133">Transmembrane helix</keyword>
<proteinExistence type="inferred from homology"/>
<reference key="1">
    <citation type="journal article" date="2004" name="Proc. Natl. Acad. Sci. U.S.A.">
        <title>Complete genomes of two clinical Staphylococcus aureus strains: evidence for the rapid evolution of virulence and drug resistance.</title>
        <authorList>
            <person name="Holden M.T.G."/>
            <person name="Feil E.J."/>
            <person name="Lindsay J.A."/>
            <person name="Peacock S.J."/>
            <person name="Day N.P.J."/>
            <person name="Enright M.C."/>
            <person name="Foster T.J."/>
            <person name="Moore C.E."/>
            <person name="Hurst L."/>
            <person name="Atkin R."/>
            <person name="Barron A."/>
            <person name="Bason N."/>
            <person name="Bentley S.D."/>
            <person name="Chillingworth C."/>
            <person name="Chillingworth T."/>
            <person name="Churcher C."/>
            <person name="Clark L."/>
            <person name="Corton C."/>
            <person name="Cronin A."/>
            <person name="Doggett J."/>
            <person name="Dowd L."/>
            <person name="Feltwell T."/>
            <person name="Hance Z."/>
            <person name="Harris B."/>
            <person name="Hauser H."/>
            <person name="Holroyd S."/>
            <person name="Jagels K."/>
            <person name="James K.D."/>
            <person name="Lennard N."/>
            <person name="Line A."/>
            <person name="Mayes R."/>
            <person name="Moule S."/>
            <person name="Mungall K."/>
            <person name="Ormond D."/>
            <person name="Quail M.A."/>
            <person name="Rabbinowitsch E."/>
            <person name="Rutherford K.M."/>
            <person name="Sanders M."/>
            <person name="Sharp S."/>
            <person name="Simmonds M."/>
            <person name="Stevens K."/>
            <person name="Whitehead S."/>
            <person name="Barrell B.G."/>
            <person name="Spratt B.G."/>
            <person name="Parkhill J."/>
        </authorList>
    </citation>
    <scope>NUCLEOTIDE SEQUENCE [LARGE SCALE GENOMIC DNA]</scope>
    <source>
        <strain>MRSA252</strain>
    </source>
</reference>
<sequence length="201" mass="23057">MSHDTNTIDSRTHEGELNKLGFWIFITAEFALFGTLFATLLTLQHGGDYAGKMTTELFELPLVLIMTFALLFSSYTCGIAIYYMRQEKQKLMMFWMIITLLLGLVFVGFEIYEFAHYASEGVNPTIGSYWSSFFILLGTHGCHVSLGIVWAICLLIQIQRRGLDKYNAPKLFIVSLYWHFLDVVWVFIFTAVYMIGMVYSG</sequence>
<organism>
    <name type="scientific">Staphylococcus aureus (strain MRSA252)</name>
    <dbReference type="NCBI Taxonomy" id="282458"/>
    <lineage>
        <taxon>Bacteria</taxon>
        <taxon>Bacillati</taxon>
        <taxon>Bacillota</taxon>
        <taxon>Bacilli</taxon>
        <taxon>Bacillales</taxon>
        <taxon>Staphylococcaceae</taxon>
        <taxon>Staphylococcus</taxon>
    </lineage>
</organism>
<accession>Q6GI25</accession>
<dbReference type="EC" id="1.10.3.-"/>
<dbReference type="EMBL" id="BX571856">
    <property type="protein sequence ID" value="CAG40036.1"/>
    <property type="molecule type" value="Genomic_DNA"/>
</dbReference>
<dbReference type="RefSeq" id="WP_000017736.1">
    <property type="nucleotide sequence ID" value="NC_002952.2"/>
</dbReference>
<dbReference type="SMR" id="Q6GI25"/>
<dbReference type="GeneID" id="66839255"/>
<dbReference type="KEGG" id="sar:SAR1032"/>
<dbReference type="HOGENOM" id="CLU_044071_3_2_9"/>
<dbReference type="Proteomes" id="UP000000596">
    <property type="component" value="Chromosome"/>
</dbReference>
<dbReference type="GO" id="GO:0005886">
    <property type="term" value="C:plasma membrane"/>
    <property type="evidence" value="ECO:0007669"/>
    <property type="project" value="UniProtKB-SubCell"/>
</dbReference>
<dbReference type="GO" id="GO:0004129">
    <property type="term" value="F:cytochrome-c oxidase activity"/>
    <property type="evidence" value="ECO:0007669"/>
    <property type="project" value="InterPro"/>
</dbReference>
<dbReference type="GO" id="GO:0019646">
    <property type="term" value="P:aerobic electron transport chain"/>
    <property type="evidence" value="ECO:0007669"/>
    <property type="project" value="InterPro"/>
</dbReference>
<dbReference type="GO" id="GO:0042773">
    <property type="term" value="P:ATP synthesis coupled electron transport"/>
    <property type="evidence" value="ECO:0007669"/>
    <property type="project" value="InterPro"/>
</dbReference>
<dbReference type="CDD" id="cd02863">
    <property type="entry name" value="Ubiquinol_oxidase_III"/>
    <property type="match status" value="1"/>
</dbReference>
<dbReference type="FunFam" id="1.20.120.80:FF:000001">
    <property type="entry name" value="Cytochrome (Ubi)quinol oxidase subunit III"/>
    <property type="match status" value="1"/>
</dbReference>
<dbReference type="Gene3D" id="1.20.120.80">
    <property type="entry name" value="Cytochrome c oxidase, subunit III, four-helix bundle"/>
    <property type="match status" value="1"/>
</dbReference>
<dbReference type="InterPro" id="IPR024791">
    <property type="entry name" value="Cyt_c/ubiquinol_Oxase_su3"/>
</dbReference>
<dbReference type="InterPro" id="IPR000298">
    <property type="entry name" value="Cyt_c_oxidase-like_su3"/>
</dbReference>
<dbReference type="InterPro" id="IPR035973">
    <property type="entry name" value="Cyt_c_oxidase_su3-like_sf"/>
</dbReference>
<dbReference type="InterPro" id="IPR013833">
    <property type="entry name" value="Cyt_c_oxidase_su3_a-hlx"/>
</dbReference>
<dbReference type="InterPro" id="IPR014246">
    <property type="entry name" value="QoxC"/>
</dbReference>
<dbReference type="InterPro" id="IPR033946">
    <property type="entry name" value="Ubiquinol_oxase_su3_dom"/>
</dbReference>
<dbReference type="NCBIfam" id="TIGR02897">
    <property type="entry name" value="QoxC"/>
    <property type="match status" value="1"/>
</dbReference>
<dbReference type="PANTHER" id="PTHR11403:SF2">
    <property type="entry name" value="CYTOCHROME BO(3) UBIQUINOL OXIDASE SUBUNIT 3"/>
    <property type="match status" value="1"/>
</dbReference>
<dbReference type="PANTHER" id="PTHR11403">
    <property type="entry name" value="CYTOCHROME C OXIDASE SUBUNIT III"/>
    <property type="match status" value="1"/>
</dbReference>
<dbReference type="Pfam" id="PF00510">
    <property type="entry name" value="COX3"/>
    <property type="match status" value="1"/>
</dbReference>
<dbReference type="SUPFAM" id="SSF81452">
    <property type="entry name" value="Cytochrome c oxidase subunit III-like"/>
    <property type="match status" value="1"/>
</dbReference>
<dbReference type="PROSITE" id="PS50253">
    <property type="entry name" value="COX3"/>
    <property type="match status" value="1"/>
</dbReference>